<dbReference type="EC" id="2.7.7.38" evidence="1"/>
<dbReference type="EMBL" id="BX571864">
    <property type="protein sequence ID" value="CAE13927.1"/>
    <property type="molecule type" value="Genomic_DNA"/>
</dbReference>
<dbReference type="RefSeq" id="WP_011145925.1">
    <property type="nucleotide sequence ID" value="NC_005126.1"/>
</dbReference>
<dbReference type="SMR" id="Q7N6C2"/>
<dbReference type="STRING" id="243265.plu1634"/>
<dbReference type="GeneID" id="48847921"/>
<dbReference type="KEGG" id="plu:plu1634"/>
<dbReference type="eggNOG" id="COG1212">
    <property type="taxonomic scope" value="Bacteria"/>
</dbReference>
<dbReference type="HOGENOM" id="CLU_065038_1_0_6"/>
<dbReference type="OrthoDB" id="9815559at2"/>
<dbReference type="UniPathway" id="UPA00030"/>
<dbReference type="UniPathway" id="UPA00358">
    <property type="reaction ID" value="UER00476"/>
</dbReference>
<dbReference type="Proteomes" id="UP000002514">
    <property type="component" value="Chromosome"/>
</dbReference>
<dbReference type="GO" id="GO:0005829">
    <property type="term" value="C:cytosol"/>
    <property type="evidence" value="ECO:0007669"/>
    <property type="project" value="TreeGrafter"/>
</dbReference>
<dbReference type="GO" id="GO:0008690">
    <property type="term" value="F:3-deoxy-manno-octulosonate cytidylyltransferase activity"/>
    <property type="evidence" value="ECO:0007669"/>
    <property type="project" value="UniProtKB-UniRule"/>
</dbReference>
<dbReference type="GO" id="GO:0033468">
    <property type="term" value="P:CMP-keto-3-deoxy-D-manno-octulosonic acid biosynthetic process"/>
    <property type="evidence" value="ECO:0007669"/>
    <property type="project" value="UniProtKB-UniRule"/>
</dbReference>
<dbReference type="GO" id="GO:0009103">
    <property type="term" value="P:lipopolysaccharide biosynthetic process"/>
    <property type="evidence" value="ECO:0007669"/>
    <property type="project" value="UniProtKB-UniRule"/>
</dbReference>
<dbReference type="CDD" id="cd02517">
    <property type="entry name" value="CMP-KDO-Synthetase"/>
    <property type="match status" value="1"/>
</dbReference>
<dbReference type="FunFam" id="3.90.550.10:FF:000011">
    <property type="entry name" value="3-deoxy-manno-octulosonate cytidylyltransferase"/>
    <property type="match status" value="1"/>
</dbReference>
<dbReference type="Gene3D" id="3.90.550.10">
    <property type="entry name" value="Spore Coat Polysaccharide Biosynthesis Protein SpsA, Chain A"/>
    <property type="match status" value="1"/>
</dbReference>
<dbReference type="HAMAP" id="MF_00057">
    <property type="entry name" value="KdsB"/>
    <property type="match status" value="1"/>
</dbReference>
<dbReference type="InterPro" id="IPR003329">
    <property type="entry name" value="Cytidylyl_trans"/>
</dbReference>
<dbReference type="InterPro" id="IPR004528">
    <property type="entry name" value="KdsB"/>
</dbReference>
<dbReference type="InterPro" id="IPR029044">
    <property type="entry name" value="Nucleotide-diphossugar_trans"/>
</dbReference>
<dbReference type="NCBIfam" id="TIGR00466">
    <property type="entry name" value="kdsB"/>
    <property type="match status" value="1"/>
</dbReference>
<dbReference type="NCBIfam" id="NF003950">
    <property type="entry name" value="PRK05450.1-3"/>
    <property type="match status" value="1"/>
</dbReference>
<dbReference type="NCBIfam" id="NF003952">
    <property type="entry name" value="PRK05450.1-5"/>
    <property type="match status" value="1"/>
</dbReference>
<dbReference type="NCBIfam" id="NF009905">
    <property type="entry name" value="PRK13368.1"/>
    <property type="match status" value="1"/>
</dbReference>
<dbReference type="PANTHER" id="PTHR42866">
    <property type="entry name" value="3-DEOXY-MANNO-OCTULOSONATE CYTIDYLYLTRANSFERASE"/>
    <property type="match status" value="1"/>
</dbReference>
<dbReference type="PANTHER" id="PTHR42866:SF2">
    <property type="entry name" value="3-DEOXY-MANNO-OCTULOSONATE CYTIDYLYLTRANSFERASE, MITOCHONDRIAL"/>
    <property type="match status" value="1"/>
</dbReference>
<dbReference type="Pfam" id="PF02348">
    <property type="entry name" value="CTP_transf_3"/>
    <property type="match status" value="1"/>
</dbReference>
<dbReference type="SUPFAM" id="SSF53448">
    <property type="entry name" value="Nucleotide-diphospho-sugar transferases"/>
    <property type="match status" value="1"/>
</dbReference>
<protein>
    <recommendedName>
        <fullName evidence="1">3-deoxy-manno-octulosonate cytidylyltransferase</fullName>
        <ecNumber evidence="1">2.7.7.38</ecNumber>
    </recommendedName>
    <alternativeName>
        <fullName evidence="1">CMP-2-keto-3-deoxyoctulosonic acid synthase</fullName>
        <shortName evidence="1">CKS</shortName>
        <shortName evidence="1">CMP-KDO synthase</shortName>
    </alternativeName>
</protein>
<reference key="1">
    <citation type="journal article" date="2003" name="Nat. Biotechnol.">
        <title>The genome sequence of the entomopathogenic bacterium Photorhabdus luminescens.</title>
        <authorList>
            <person name="Duchaud E."/>
            <person name="Rusniok C."/>
            <person name="Frangeul L."/>
            <person name="Buchrieser C."/>
            <person name="Givaudan A."/>
            <person name="Taourit S."/>
            <person name="Bocs S."/>
            <person name="Boursaux-Eude C."/>
            <person name="Chandler M."/>
            <person name="Charles J.-F."/>
            <person name="Dassa E."/>
            <person name="Derose R."/>
            <person name="Derzelle S."/>
            <person name="Freyssinet G."/>
            <person name="Gaudriault S."/>
            <person name="Medigue C."/>
            <person name="Lanois A."/>
            <person name="Powell K."/>
            <person name="Siguier P."/>
            <person name="Vincent R."/>
            <person name="Wingate V."/>
            <person name="Zouine M."/>
            <person name="Glaser P."/>
            <person name="Boemare N."/>
            <person name="Danchin A."/>
            <person name="Kunst F."/>
        </authorList>
    </citation>
    <scope>NUCLEOTIDE SEQUENCE [LARGE SCALE GENOMIC DNA]</scope>
    <source>
        <strain>DSM 15139 / CIP 105565 / TT01</strain>
    </source>
</reference>
<organism>
    <name type="scientific">Photorhabdus laumondii subsp. laumondii (strain DSM 15139 / CIP 105565 / TT01)</name>
    <name type="common">Photorhabdus luminescens subsp. laumondii</name>
    <dbReference type="NCBI Taxonomy" id="243265"/>
    <lineage>
        <taxon>Bacteria</taxon>
        <taxon>Pseudomonadati</taxon>
        <taxon>Pseudomonadota</taxon>
        <taxon>Gammaproteobacteria</taxon>
        <taxon>Enterobacterales</taxon>
        <taxon>Morganellaceae</taxon>
        <taxon>Photorhabdus</taxon>
    </lineage>
</organism>
<gene>
    <name evidence="1" type="primary">kdsB</name>
    <name type="ordered locus">plu1634</name>
</gene>
<proteinExistence type="inferred from homology"/>
<keyword id="KW-0963">Cytoplasm</keyword>
<keyword id="KW-0448">Lipopolysaccharide biosynthesis</keyword>
<keyword id="KW-0548">Nucleotidyltransferase</keyword>
<keyword id="KW-1185">Reference proteome</keyword>
<keyword id="KW-0808">Transferase</keyword>
<evidence type="ECO:0000255" key="1">
    <source>
        <dbReference type="HAMAP-Rule" id="MF_00057"/>
    </source>
</evidence>
<comment type="function">
    <text evidence="1">Activates KDO (a required 8-carbon sugar) for incorporation into bacterial lipopolysaccharide in Gram-negative bacteria.</text>
</comment>
<comment type="catalytic activity">
    <reaction evidence="1">
        <text>3-deoxy-alpha-D-manno-oct-2-ulosonate + CTP = CMP-3-deoxy-beta-D-manno-octulosonate + diphosphate</text>
        <dbReference type="Rhea" id="RHEA:23448"/>
        <dbReference type="ChEBI" id="CHEBI:33019"/>
        <dbReference type="ChEBI" id="CHEBI:37563"/>
        <dbReference type="ChEBI" id="CHEBI:85986"/>
        <dbReference type="ChEBI" id="CHEBI:85987"/>
        <dbReference type="EC" id="2.7.7.38"/>
    </reaction>
</comment>
<comment type="pathway">
    <text evidence="1">Nucleotide-sugar biosynthesis; CMP-3-deoxy-D-manno-octulosonate biosynthesis; CMP-3-deoxy-D-manno-octulosonate from 3-deoxy-D-manno-octulosonate and CTP: step 1/1.</text>
</comment>
<comment type="pathway">
    <text evidence="1">Bacterial outer membrane biogenesis; lipopolysaccharide biosynthesis.</text>
</comment>
<comment type="subcellular location">
    <subcellularLocation>
        <location evidence="1">Cytoplasm</location>
    </subcellularLocation>
</comment>
<comment type="similarity">
    <text evidence="1">Belongs to the KdsB family.</text>
</comment>
<sequence length="249" mass="27704">MFTVIIPARFASTRLPGKPLADIHGKPMIVRVMERAKRSGAGRVIVATDNHDVVDAVVAAGGEACLTNENHHSGTERLAEVINKYQFSDDEIIVNVQGDEPLIPEEIIKQVAENLAGCKAGMATLAVQIHDAEEAFNPNAVKVVMDKQGYALYFSRATIPWERGRFIQSRETIGDNFLRHIGIYAYRAGFIRRYVQWEPSPLEQIEMLEQLRVLWYGEKIHVGIALKAPGVGVDTPEDLAAIRKVFTEI</sequence>
<name>KDSB_PHOLL</name>
<feature type="chain" id="PRO_0000370113" description="3-deoxy-manno-octulosonate cytidylyltransferase">
    <location>
        <begin position="1"/>
        <end position="249"/>
    </location>
</feature>
<accession>Q7N6C2</accession>